<proteinExistence type="inferred from homology"/>
<comment type="function">
    <text evidence="1">Catalyzes the isomerization of sedoheptulose 7-phosphate in D-glycero-D-manno-heptose 7-phosphate.</text>
</comment>
<comment type="catalytic activity">
    <reaction evidence="1">
        <text>2 D-sedoheptulose 7-phosphate = D-glycero-alpha-D-manno-heptose 7-phosphate + D-glycero-beta-D-manno-heptose 7-phosphate</text>
        <dbReference type="Rhea" id="RHEA:27489"/>
        <dbReference type="ChEBI" id="CHEBI:57483"/>
        <dbReference type="ChEBI" id="CHEBI:60203"/>
        <dbReference type="ChEBI" id="CHEBI:60204"/>
        <dbReference type="EC" id="5.3.1.28"/>
    </reaction>
</comment>
<comment type="cofactor">
    <cofactor evidence="1">
        <name>Zn(2+)</name>
        <dbReference type="ChEBI" id="CHEBI:29105"/>
    </cofactor>
    <text evidence="1">Binds 1 zinc ion per subunit.</text>
</comment>
<comment type="pathway">
    <text evidence="1">Carbohydrate biosynthesis; D-glycero-D-manno-heptose 7-phosphate biosynthesis; D-glycero-alpha-D-manno-heptose 7-phosphate and D-glycero-beta-D-manno-heptose 7-phosphate from sedoheptulose 7-phosphate: step 1/1.</text>
</comment>
<comment type="subunit">
    <text evidence="1">Homotetramer.</text>
</comment>
<comment type="subcellular location">
    <subcellularLocation>
        <location evidence="1">Cytoplasm</location>
    </subcellularLocation>
</comment>
<comment type="miscellaneous">
    <text evidence="1">The reaction produces a racemic mixture of D-glycero-alpha-D-manno-heptose 7-phosphate and D-glycero-beta-D-manno-heptose 7-phosphate.</text>
</comment>
<comment type="similarity">
    <text evidence="1">Belongs to the SIS family. GmhA subfamily.</text>
</comment>
<evidence type="ECO:0000255" key="1">
    <source>
        <dbReference type="HAMAP-Rule" id="MF_00067"/>
    </source>
</evidence>
<sequence>MYHDLIRSELNEAADTLANFLKDDSNIDAIQRAAILLADSFKAGGKVLSCGNGGSHCDAMHFAEELTGRYRENRPGYPAIAISDVSHLSCVSNDFGYDYVFSRYVEAVGREGDVLLGISTSGNSGNIIKAIEAARAKGMKVITLTGKDGGKMAGSADIEIRVPHFGYADRIQEIHIKVIHILIQLIEKEMVKA</sequence>
<feature type="chain" id="PRO_1000009105" description="Phosphoheptose isomerase">
    <location>
        <begin position="1"/>
        <end position="193"/>
    </location>
</feature>
<feature type="domain" description="SIS" evidence="1">
    <location>
        <begin position="37"/>
        <end position="193"/>
    </location>
</feature>
<feature type="binding site" evidence="1">
    <location>
        <begin position="52"/>
        <end position="54"/>
    </location>
    <ligand>
        <name>substrate</name>
    </ligand>
</feature>
<feature type="binding site" evidence="1">
    <location>
        <position position="61"/>
    </location>
    <ligand>
        <name>Zn(2+)</name>
        <dbReference type="ChEBI" id="CHEBI:29105"/>
    </ligand>
</feature>
<feature type="binding site" evidence="1">
    <location>
        <position position="65"/>
    </location>
    <ligand>
        <name>substrate</name>
    </ligand>
</feature>
<feature type="binding site" evidence="1">
    <location>
        <position position="65"/>
    </location>
    <ligand>
        <name>Zn(2+)</name>
        <dbReference type="ChEBI" id="CHEBI:29105"/>
    </ligand>
</feature>
<feature type="binding site" evidence="1">
    <location>
        <begin position="93"/>
        <end position="94"/>
    </location>
    <ligand>
        <name>substrate</name>
    </ligand>
</feature>
<feature type="binding site" evidence="1">
    <location>
        <begin position="119"/>
        <end position="121"/>
    </location>
    <ligand>
        <name>substrate</name>
    </ligand>
</feature>
<feature type="binding site" evidence="1">
    <location>
        <position position="124"/>
    </location>
    <ligand>
        <name>substrate</name>
    </ligand>
</feature>
<feature type="binding site" evidence="1">
    <location>
        <position position="172"/>
    </location>
    <ligand>
        <name>substrate</name>
    </ligand>
</feature>
<feature type="binding site" evidence="1">
    <location>
        <position position="172"/>
    </location>
    <ligand>
        <name>Zn(2+)</name>
        <dbReference type="ChEBI" id="CHEBI:29105"/>
    </ligand>
</feature>
<feature type="binding site" evidence="1">
    <location>
        <position position="180"/>
    </location>
    <ligand>
        <name>Zn(2+)</name>
        <dbReference type="ChEBI" id="CHEBI:29105"/>
    </ligand>
</feature>
<reference key="1">
    <citation type="journal article" date="2006" name="J. Bacteriol.">
        <title>Complete genome sequence of Yersinia pestis strains Antiqua and Nepal516: evidence of gene reduction in an emerging pathogen.</title>
        <authorList>
            <person name="Chain P.S.G."/>
            <person name="Hu P."/>
            <person name="Malfatti S.A."/>
            <person name="Radnedge L."/>
            <person name="Larimer F."/>
            <person name="Vergez L.M."/>
            <person name="Worsham P."/>
            <person name="Chu M.C."/>
            <person name="Andersen G.L."/>
        </authorList>
    </citation>
    <scope>NUCLEOTIDE SEQUENCE [LARGE SCALE GENOMIC DNA]</scope>
    <source>
        <strain>Nepal516</strain>
    </source>
</reference>
<reference key="2">
    <citation type="submission" date="2009-04" db="EMBL/GenBank/DDBJ databases">
        <title>Yersinia pestis Nepal516A whole genome shotgun sequencing project.</title>
        <authorList>
            <person name="Plunkett G. III"/>
            <person name="Anderson B.D."/>
            <person name="Baumler D.J."/>
            <person name="Burland V."/>
            <person name="Cabot E.L."/>
            <person name="Glasner J.D."/>
            <person name="Mau B."/>
            <person name="Neeno-Eckwall E."/>
            <person name="Perna N.T."/>
            <person name="Munk A.C."/>
            <person name="Tapia R."/>
            <person name="Green L.D."/>
            <person name="Rogers Y.C."/>
            <person name="Detter J.C."/>
            <person name="Bruce D.C."/>
            <person name="Brettin T.S."/>
        </authorList>
    </citation>
    <scope>NUCLEOTIDE SEQUENCE [LARGE SCALE GENOMIC DNA]</scope>
    <source>
        <strain>Nepal516</strain>
    </source>
</reference>
<accession>Q1CLE7</accession>
<accession>C4GQC0</accession>
<name>GMHA_YERPN</name>
<protein>
    <recommendedName>
        <fullName evidence="1">Phosphoheptose isomerase</fullName>
        <ecNumber evidence="1">5.3.1.28</ecNumber>
    </recommendedName>
    <alternativeName>
        <fullName evidence="1">Sedoheptulose 7-phosphate isomerase</fullName>
    </alternativeName>
</protein>
<organism>
    <name type="scientific">Yersinia pestis bv. Antiqua (strain Nepal516)</name>
    <dbReference type="NCBI Taxonomy" id="377628"/>
    <lineage>
        <taxon>Bacteria</taxon>
        <taxon>Pseudomonadati</taxon>
        <taxon>Pseudomonadota</taxon>
        <taxon>Gammaproteobacteria</taxon>
        <taxon>Enterobacterales</taxon>
        <taxon>Yersiniaceae</taxon>
        <taxon>Yersinia</taxon>
    </lineage>
</organism>
<dbReference type="EC" id="5.3.1.28" evidence="1"/>
<dbReference type="EMBL" id="CP000305">
    <property type="protein sequence ID" value="ABG17183.1"/>
    <property type="molecule type" value="Genomic_DNA"/>
</dbReference>
<dbReference type="EMBL" id="ACNQ01000008">
    <property type="protein sequence ID" value="EEO77261.1"/>
    <property type="molecule type" value="Genomic_DNA"/>
</dbReference>
<dbReference type="SMR" id="Q1CLE7"/>
<dbReference type="KEGG" id="ypn:YPN_0851"/>
<dbReference type="HOGENOM" id="CLU_080999_4_0_6"/>
<dbReference type="UniPathway" id="UPA00041">
    <property type="reaction ID" value="UER00436"/>
</dbReference>
<dbReference type="Proteomes" id="UP000008936">
    <property type="component" value="Chromosome"/>
</dbReference>
<dbReference type="GO" id="GO:0005737">
    <property type="term" value="C:cytoplasm"/>
    <property type="evidence" value="ECO:0007669"/>
    <property type="project" value="UniProtKB-SubCell"/>
</dbReference>
<dbReference type="GO" id="GO:0097367">
    <property type="term" value="F:carbohydrate derivative binding"/>
    <property type="evidence" value="ECO:0007669"/>
    <property type="project" value="InterPro"/>
</dbReference>
<dbReference type="GO" id="GO:0008968">
    <property type="term" value="F:D-sedoheptulose 7-phosphate isomerase activity"/>
    <property type="evidence" value="ECO:0007669"/>
    <property type="project" value="UniProtKB-UniRule"/>
</dbReference>
<dbReference type="GO" id="GO:0008270">
    <property type="term" value="F:zinc ion binding"/>
    <property type="evidence" value="ECO:0007669"/>
    <property type="project" value="UniProtKB-UniRule"/>
</dbReference>
<dbReference type="GO" id="GO:0005975">
    <property type="term" value="P:carbohydrate metabolic process"/>
    <property type="evidence" value="ECO:0007669"/>
    <property type="project" value="UniProtKB-UniRule"/>
</dbReference>
<dbReference type="GO" id="GO:2001061">
    <property type="term" value="P:D-glycero-D-manno-heptose 7-phosphate biosynthetic process"/>
    <property type="evidence" value="ECO:0007669"/>
    <property type="project" value="UniProtKB-UniPathway"/>
</dbReference>
<dbReference type="CDD" id="cd05006">
    <property type="entry name" value="SIS_GmhA"/>
    <property type="match status" value="1"/>
</dbReference>
<dbReference type="FunFam" id="3.40.50.10490:FF:000013">
    <property type="entry name" value="Phosphoheptose isomerase"/>
    <property type="match status" value="1"/>
</dbReference>
<dbReference type="Gene3D" id="3.40.50.10490">
    <property type="entry name" value="Glucose-6-phosphate isomerase like protein, domain 1"/>
    <property type="match status" value="1"/>
</dbReference>
<dbReference type="HAMAP" id="MF_00067">
    <property type="entry name" value="GmhA"/>
    <property type="match status" value="1"/>
</dbReference>
<dbReference type="InterPro" id="IPR035461">
    <property type="entry name" value="GmhA/DiaA"/>
</dbReference>
<dbReference type="InterPro" id="IPR004515">
    <property type="entry name" value="Phosphoheptose_Isoase"/>
</dbReference>
<dbReference type="InterPro" id="IPR001347">
    <property type="entry name" value="SIS_dom"/>
</dbReference>
<dbReference type="InterPro" id="IPR046348">
    <property type="entry name" value="SIS_dom_sf"/>
</dbReference>
<dbReference type="InterPro" id="IPR050099">
    <property type="entry name" value="SIS_GmhA/DiaA_subfam"/>
</dbReference>
<dbReference type="NCBIfam" id="TIGR00441">
    <property type="entry name" value="gmhA"/>
    <property type="match status" value="1"/>
</dbReference>
<dbReference type="NCBIfam" id="NF001628">
    <property type="entry name" value="PRK00414.1"/>
    <property type="match status" value="1"/>
</dbReference>
<dbReference type="PANTHER" id="PTHR30390:SF7">
    <property type="entry name" value="PHOSPHOHEPTOSE ISOMERASE"/>
    <property type="match status" value="1"/>
</dbReference>
<dbReference type="PANTHER" id="PTHR30390">
    <property type="entry name" value="SEDOHEPTULOSE 7-PHOSPHATE ISOMERASE / DNAA INITIATOR-ASSOCIATING FACTOR FOR REPLICATION INITIATION"/>
    <property type="match status" value="1"/>
</dbReference>
<dbReference type="Pfam" id="PF13580">
    <property type="entry name" value="SIS_2"/>
    <property type="match status" value="1"/>
</dbReference>
<dbReference type="SUPFAM" id="SSF53697">
    <property type="entry name" value="SIS domain"/>
    <property type="match status" value="1"/>
</dbReference>
<dbReference type="PROSITE" id="PS51464">
    <property type="entry name" value="SIS"/>
    <property type="match status" value="1"/>
</dbReference>
<keyword id="KW-0119">Carbohydrate metabolism</keyword>
<keyword id="KW-0963">Cytoplasm</keyword>
<keyword id="KW-0413">Isomerase</keyword>
<keyword id="KW-0479">Metal-binding</keyword>
<keyword id="KW-0862">Zinc</keyword>
<gene>
    <name evidence="1" type="primary">gmhA</name>
    <name type="ordered locus">YPN_0851</name>
    <name type="ORF">YP516_0920</name>
</gene>